<name>APT_JANSC</name>
<keyword id="KW-0963">Cytoplasm</keyword>
<keyword id="KW-0328">Glycosyltransferase</keyword>
<keyword id="KW-0660">Purine salvage</keyword>
<keyword id="KW-1185">Reference proteome</keyword>
<keyword id="KW-0808">Transferase</keyword>
<dbReference type="EC" id="2.4.2.7" evidence="1"/>
<dbReference type="EMBL" id="CP000264">
    <property type="protein sequence ID" value="ABD56129.1"/>
    <property type="molecule type" value="Genomic_DNA"/>
</dbReference>
<dbReference type="SMR" id="Q28MD3"/>
<dbReference type="STRING" id="290400.Jann_3212"/>
<dbReference type="KEGG" id="jan:Jann_3212"/>
<dbReference type="eggNOG" id="COG0503">
    <property type="taxonomic scope" value="Bacteria"/>
</dbReference>
<dbReference type="HOGENOM" id="CLU_063339_3_0_5"/>
<dbReference type="UniPathway" id="UPA00588">
    <property type="reaction ID" value="UER00646"/>
</dbReference>
<dbReference type="Proteomes" id="UP000008326">
    <property type="component" value="Chromosome"/>
</dbReference>
<dbReference type="GO" id="GO:0005737">
    <property type="term" value="C:cytoplasm"/>
    <property type="evidence" value="ECO:0007669"/>
    <property type="project" value="UniProtKB-SubCell"/>
</dbReference>
<dbReference type="GO" id="GO:0002055">
    <property type="term" value="F:adenine binding"/>
    <property type="evidence" value="ECO:0007669"/>
    <property type="project" value="TreeGrafter"/>
</dbReference>
<dbReference type="GO" id="GO:0003999">
    <property type="term" value="F:adenine phosphoribosyltransferase activity"/>
    <property type="evidence" value="ECO:0007669"/>
    <property type="project" value="UniProtKB-UniRule"/>
</dbReference>
<dbReference type="GO" id="GO:0016208">
    <property type="term" value="F:AMP binding"/>
    <property type="evidence" value="ECO:0007669"/>
    <property type="project" value="TreeGrafter"/>
</dbReference>
<dbReference type="GO" id="GO:0006168">
    <property type="term" value="P:adenine salvage"/>
    <property type="evidence" value="ECO:0007669"/>
    <property type="project" value="InterPro"/>
</dbReference>
<dbReference type="GO" id="GO:0044209">
    <property type="term" value="P:AMP salvage"/>
    <property type="evidence" value="ECO:0007669"/>
    <property type="project" value="UniProtKB-UniRule"/>
</dbReference>
<dbReference type="GO" id="GO:0006166">
    <property type="term" value="P:purine ribonucleoside salvage"/>
    <property type="evidence" value="ECO:0007669"/>
    <property type="project" value="UniProtKB-KW"/>
</dbReference>
<dbReference type="CDD" id="cd06223">
    <property type="entry name" value="PRTases_typeI"/>
    <property type="match status" value="1"/>
</dbReference>
<dbReference type="FunFam" id="3.40.50.2020:FF:000021">
    <property type="entry name" value="Adenine phosphoribosyltransferase"/>
    <property type="match status" value="1"/>
</dbReference>
<dbReference type="Gene3D" id="3.40.50.2020">
    <property type="match status" value="1"/>
</dbReference>
<dbReference type="HAMAP" id="MF_00004">
    <property type="entry name" value="Aden_phosphoribosyltr"/>
    <property type="match status" value="1"/>
</dbReference>
<dbReference type="InterPro" id="IPR005764">
    <property type="entry name" value="Ade_phspho_trans"/>
</dbReference>
<dbReference type="InterPro" id="IPR000836">
    <property type="entry name" value="PRibTrfase_dom"/>
</dbReference>
<dbReference type="InterPro" id="IPR029057">
    <property type="entry name" value="PRTase-like"/>
</dbReference>
<dbReference type="InterPro" id="IPR050054">
    <property type="entry name" value="UPRTase/APRTase"/>
</dbReference>
<dbReference type="NCBIfam" id="TIGR01090">
    <property type="entry name" value="apt"/>
    <property type="match status" value="1"/>
</dbReference>
<dbReference type="NCBIfam" id="NF002634">
    <property type="entry name" value="PRK02304.1-3"/>
    <property type="match status" value="1"/>
</dbReference>
<dbReference type="NCBIfam" id="NF002636">
    <property type="entry name" value="PRK02304.1-5"/>
    <property type="match status" value="1"/>
</dbReference>
<dbReference type="PANTHER" id="PTHR32315">
    <property type="entry name" value="ADENINE PHOSPHORIBOSYLTRANSFERASE"/>
    <property type="match status" value="1"/>
</dbReference>
<dbReference type="PANTHER" id="PTHR32315:SF3">
    <property type="entry name" value="ADENINE PHOSPHORIBOSYLTRANSFERASE"/>
    <property type="match status" value="1"/>
</dbReference>
<dbReference type="Pfam" id="PF00156">
    <property type="entry name" value="Pribosyltran"/>
    <property type="match status" value="1"/>
</dbReference>
<dbReference type="SUPFAM" id="SSF53271">
    <property type="entry name" value="PRTase-like"/>
    <property type="match status" value="1"/>
</dbReference>
<dbReference type="PROSITE" id="PS00103">
    <property type="entry name" value="PUR_PYR_PR_TRANSFER"/>
    <property type="match status" value="1"/>
</dbReference>
<reference key="1">
    <citation type="submission" date="2006-02" db="EMBL/GenBank/DDBJ databases">
        <title>Complete sequence of chromosome of Jannaschia sp. CCS1.</title>
        <authorList>
            <consortium name="US DOE Joint Genome Institute"/>
            <person name="Copeland A."/>
            <person name="Lucas S."/>
            <person name="Lapidus A."/>
            <person name="Barry K."/>
            <person name="Detter J.C."/>
            <person name="Glavina del Rio T."/>
            <person name="Hammon N."/>
            <person name="Israni S."/>
            <person name="Pitluck S."/>
            <person name="Brettin T."/>
            <person name="Bruce D."/>
            <person name="Han C."/>
            <person name="Tapia R."/>
            <person name="Gilna P."/>
            <person name="Chertkov O."/>
            <person name="Saunders E."/>
            <person name="Schmutz J."/>
            <person name="Larimer F."/>
            <person name="Land M."/>
            <person name="Kyrpides N."/>
            <person name="Lykidis A."/>
            <person name="Moran M.A."/>
            <person name="Belas R."/>
            <person name="Ye W."/>
            <person name="Buchan A."/>
            <person name="Gonzalez J.M."/>
            <person name="Schell M.A."/>
            <person name="Richardson P."/>
        </authorList>
    </citation>
    <scope>NUCLEOTIDE SEQUENCE [LARGE SCALE GENOMIC DNA]</scope>
    <source>
        <strain>CCS1</strain>
    </source>
</reference>
<gene>
    <name evidence="1" type="primary">apt</name>
    <name type="ordered locus">Jann_3212</name>
</gene>
<organism>
    <name type="scientific">Jannaschia sp. (strain CCS1)</name>
    <dbReference type="NCBI Taxonomy" id="290400"/>
    <lineage>
        <taxon>Bacteria</taxon>
        <taxon>Pseudomonadati</taxon>
        <taxon>Pseudomonadota</taxon>
        <taxon>Alphaproteobacteria</taxon>
        <taxon>Rhodobacterales</taxon>
        <taxon>Roseobacteraceae</taxon>
        <taxon>Jannaschia</taxon>
    </lineage>
</organism>
<comment type="function">
    <text evidence="1">Catalyzes a salvage reaction resulting in the formation of AMP, that is energically less costly than de novo synthesis.</text>
</comment>
<comment type="catalytic activity">
    <reaction evidence="1">
        <text>AMP + diphosphate = 5-phospho-alpha-D-ribose 1-diphosphate + adenine</text>
        <dbReference type="Rhea" id="RHEA:16609"/>
        <dbReference type="ChEBI" id="CHEBI:16708"/>
        <dbReference type="ChEBI" id="CHEBI:33019"/>
        <dbReference type="ChEBI" id="CHEBI:58017"/>
        <dbReference type="ChEBI" id="CHEBI:456215"/>
        <dbReference type="EC" id="2.4.2.7"/>
    </reaction>
</comment>
<comment type="pathway">
    <text evidence="1">Purine metabolism; AMP biosynthesis via salvage pathway; AMP from adenine: step 1/1.</text>
</comment>
<comment type="subunit">
    <text evidence="1">Homodimer.</text>
</comment>
<comment type="subcellular location">
    <subcellularLocation>
        <location evidence="1">Cytoplasm</location>
    </subcellularLocation>
</comment>
<comment type="similarity">
    <text evidence="1">Belongs to the purine/pyrimidine phosphoribosyltransferase family.</text>
</comment>
<evidence type="ECO:0000255" key="1">
    <source>
        <dbReference type="HAMAP-Rule" id="MF_00004"/>
    </source>
</evidence>
<sequence>MIAQKSVRDYIRTIPDFPHDGILFRDVTTLFQDPRGFRLAVDQLLSPFVGETIDAVAGLEARGFILGGAVAHQLSKGFVSVRKKGKLPAATIEQAYKLEYGEAVVEIHDDAVQPGDKVLIVDDLLATGGTAEAGIKLIERLGAEVIGCAFVIDLPDLGGRAKVEAMGVPVHAICAYDGL</sequence>
<protein>
    <recommendedName>
        <fullName evidence="1">Adenine phosphoribosyltransferase</fullName>
        <shortName evidence="1">APRT</shortName>
        <ecNumber evidence="1">2.4.2.7</ecNumber>
    </recommendedName>
</protein>
<proteinExistence type="inferred from homology"/>
<accession>Q28MD3</accession>
<feature type="chain" id="PRO_1000000296" description="Adenine phosphoribosyltransferase">
    <location>
        <begin position="1"/>
        <end position="179"/>
    </location>
</feature>